<proteinExistence type="inferred from homology"/>
<gene>
    <name evidence="1" type="primary">acpS</name>
    <name type="ordered locus">Glov_2527</name>
</gene>
<feature type="chain" id="PRO_1000093879" description="Holo-[acyl-carrier-protein] synthase">
    <location>
        <begin position="1"/>
        <end position="126"/>
    </location>
</feature>
<feature type="binding site" evidence="1">
    <location>
        <position position="8"/>
    </location>
    <ligand>
        <name>Mg(2+)</name>
        <dbReference type="ChEBI" id="CHEBI:18420"/>
    </ligand>
</feature>
<feature type="binding site" evidence="1">
    <location>
        <position position="57"/>
    </location>
    <ligand>
        <name>Mg(2+)</name>
        <dbReference type="ChEBI" id="CHEBI:18420"/>
    </ligand>
</feature>
<reference key="1">
    <citation type="submission" date="2008-05" db="EMBL/GenBank/DDBJ databases">
        <title>Complete sequence of chromosome of Geobacter lovleyi SZ.</title>
        <authorList>
            <consortium name="US DOE Joint Genome Institute"/>
            <person name="Lucas S."/>
            <person name="Copeland A."/>
            <person name="Lapidus A."/>
            <person name="Glavina del Rio T."/>
            <person name="Dalin E."/>
            <person name="Tice H."/>
            <person name="Bruce D."/>
            <person name="Goodwin L."/>
            <person name="Pitluck S."/>
            <person name="Chertkov O."/>
            <person name="Meincke L."/>
            <person name="Brettin T."/>
            <person name="Detter J.C."/>
            <person name="Han C."/>
            <person name="Tapia R."/>
            <person name="Kuske C.R."/>
            <person name="Schmutz J."/>
            <person name="Larimer F."/>
            <person name="Land M."/>
            <person name="Hauser L."/>
            <person name="Kyrpides N."/>
            <person name="Mikhailova N."/>
            <person name="Sung Y."/>
            <person name="Fletcher K.E."/>
            <person name="Ritalahti K.M."/>
            <person name="Loeffler F.E."/>
            <person name="Richardson P."/>
        </authorList>
    </citation>
    <scope>NUCLEOTIDE SEQUENCE [LARGE SCALE GENOMIC DNA]</scope>
    <source>
        <strain>ATCC BAA-1151 / DSM 17278 / SZ</strain>
    </source>
</reference>
<protein>
    <recommendedName>
        <fullName evidence="1">Holo-[acyl-carrier-protein] synthase</fullName>
        <shortName evidence="1">Holo-ACP synthase</shortName>
        <ecNumber evidence="1">2.7.8.7</ecNumber>
    </recommendedName>
    <alternativeName>
        <fullName evidence="1">4'-phosphopantetheinyl transferase AcpS</fullName>
    </alternativeName>
</protein>
<sequence>MILGIGIDTVEISRFQRFLDEDNQALLNRLFAPAEQEYCRPRKQAASCLAARFAAKEAFVKALGTGLRDGICWTEIAVGNDQLGKPFLKLSGRALQLFSEQGAASAHLSLSHDGGHAVAQVILEAP</sequence>
<evidence type="ECO:0000255" key="1">
    <source>
        <dbReference type="HAMAP-Rule" id="MF_00101"/>
    </source>
</evidence>
<comment type="function">
    <text evidence="1">Transfers the 4'-phosphopantetheine moiety from coenzyme A to a Ser of acyl-carrier-protein.</text>
</comment>
<comment type="catalytic activity">
    <reaction evidence="1">
        <text>apo-[ACP] + CoA = holo-[ACP] + adenosine 3',5'-bisphosphate + H(+)</text>
        <dbReference type="Rhea" id="RHEA:12068"/>
        <dbReference type="Rhea" id="RHEA-COMP:9685"/>
        <dbReference type="Rhea" id="RHEA-COMP:9690"/>
        <dbReference type="ChEBI" id="CHEBI:15378"/>
        <dbReference type="ChEBI" id="CHEBI:29999"/>
        <dbReference type="ChEBI" id="CHEBI:57287"/>
        <dbReference type="ChEBI" id="CHEBI:58343"/>
        <dbReference type="ChEBI" id="CHEBI:64479"/>
        <dbReference type="EC" id="2.7.8.7"/>
    </reaction>
</comment>
<comment type="cofactor">
    <cofactor evidence="1">
        <name>Mg(2+)</name>
        <dbReference type="ChEBI" id="CHEBI:18420"/>
    </cofactor>
</comment>
<comment type="subcellular location">
    <subcellularLocation>
        <location evidence="1">Cytoplasm</location>
    </subcellularLocation>
</comment>
<comment type="similarity">
    <text evidence="1">Belongs to the P-Pant transferase superfamily. AcpS family.</text>
</comment>
<organism>
    <name type="scientific">Trichlorobacter lovleyi (strain ATCC BAA-1151 / DSM 17278 / SZ)</name>
    <name type="common">Geobacter lovleyi</name>
    <dbReference type="NCBI Taxonomy" id="398767"/>
    <lineage>
        <taxon>Bacteria</taxon>
        <taxon>Pseudomonadati</taxon>
        <taxon>Thermodesulfobacteriota</taxon>
        <taxon>Desulfuromonadia</taxon>
        <taxon>Geobacterales</taxon>
        <taxon>Geobacteraceae</taxon>
        <taxon>Trichlorobacter</taxon>
    </lineage>
</organism>
<accession>B3E694</accession>
<name>ACPS_TRIL1</name>
<keyword id="KW-0963">Cytoplasm</keyword>
<keyword id="KW-0275">Fatty acid biosynthesis</keyword>
<keyword id="KW-0276">Fatty acid metabolism</keyword>
<keyword id="KW-0444">Lipid biosynthesis</keyword>
<keyword id="KW-0443">Lipid metabolism</keyword>
<keyword id="KW-0460">Magnesium</keyword>
<keyword id="KW-0479">Metal-binding</keyword>
<keyword id="KW-1185">Reference proteome</keyword>
<keyword id="KW-0808">Transferase</keyword>
<dbReference type="EC" id="2.7.8.7" evidence="1"/>
<dbReference type="EMBL" id="CP001089">
    <property type="protein sequence ID" value="ACD96241.1"/>
    <property type="molecule type" value="Genomic_DNA"/>
</dbReference>
<dbReference type="RefSeq" id="WP_012470573.1">
    <property type="nucleotide sequence ID" value="NC_010814.1"/>
</dbReference>
<dbReference type="SMR" id="B3E694"/>
<dbReference type="STRING" id="398767.Glov_2527"/>
<dbReference type="KEGG" id="glo:Glov_2527"/>
<dbReference type="eggNOG" id="COG0736">
    <property type="taxonomic scope" value="Bacteria"/>
</dbReference>
<dbReference type="HOGENOM" id="CLU_089696_3_1_7"/>
<dbReference type="OrthoDB" id="517356at2"/>
<dbReference type="Proteomes" id="UP000002420">
    <property type="component" value="Chromosome"/>
</dbReference>
<dbReference type="GO" id="GO:0005737">
    <property type="term" value="C:cytoplasm"/>
    <property type="evidence" value="ECO:0007669"/>
    <property type="project" value="UniProtKB-SubCell"/>
</dbReference>
<dbReference type="GO" id="GO:0008897">
    <property type="term" value="F:holo-[acyl-carrier-protein] synthase activity"/>
    <property type="evidence" value="ECO:0007669"/>
    <property type="project" value="UniProtKB-UniRule"/>
</dbReference>
<dbReference type="GO" id="GO:0000287">
    <property type="term" value="F:magnesium ion binding"/>
    <property type="evidence" value="ECO:0007669"/>
    <property type="project" value="UniProtKB-UniRule"/>
</dbReference>
<dbReference type="GO" id="GO:0006633">
    <property type="term" value="P:fatty acid biosynthetic process"/>
    <property type="evidence" value="ECO:0007669"/>
    <property type="project" value="UniProtKB-UniRule"/>
</dbReference>
<dbReference type="Gene3D" id="3.90.470.20">
    <property type="entry name" value="4'-phosphopantetheinyl transferase domain"/>
    <property type="match status" value="1"/>
</dbReference>
<dbReference type="HAMAP" id="MF_00101">
    <property type="entry name" value="AcpS"/>
    <property type="match status" value="1"/>
</dbReference>
<dbReference type="InterPro" id="IPR008278">
    <property type="entry name" value="4-PPantetheinyl_Trfase_dom"/>
</dbReference>
<dbReference type="InterPro" id="IPR037143">
    <property type="entry name" value="4-PPantetheinyl_Trfase_dom_sf"/>
</dbReference>
<dbReference type="InterPro" id="IPR002582">
    <property type="entry name" value="ACPS"/>
</dbReference>
<dbReference type="InterPro" id="IPR004568">
    <property type="entry name" value="Ppantetheine-prot_Trfase_dom"/>
</dbReference>
<dbReference type="NCBIfam" id="TIGR00516">
    <property type="entry name" value="acpS"/>
    <property type="match status" value="1"/>
</dbReference>
<dbReference type="NCBIfam" id="TIGR00556">
    <property type="entry name" value="pantethn_trn"/>
    <property type="match status" value="1"/>
</dbReference>
<dbReference type="NCBIfam" id="NF000832">
    <property type="entry name" value="PRK00070.3-2"/>
    <property type="match status" value="1"/>
</dbReference>
<dbReference type="NCBIfam" id="NF011250">
    <property type="entry name" value="PRK14656.1"/>
    <property type="match status" value="1"/>
</dbReference>
<dbReference type="Pfam" id="PF01648">
    <property type="entry name" value="ACPS"/>
    <property type="match status" value="1"/>
</dbReference>
<dbReference type="SUPFAM" id="SSF56214">
    <property type="entry name" value="4'-phosphopantetheinyl transferase"/>
    <property type="match status" value="1"/>
</dbReference>